<evidence type="ECO:0000255" key="1">
    <source>
        <dbReference type="HAMAP-Rule" id="MF_00860"/>
    </source>
</evidence>
<evidence type="ECO:0000305" key="2"/>
<gene>
    <name type="primary">RBCS1</name>
</gene>
<gene>
    <name type="primary">RBCS4</name>
</gene>
<reference key="1">
    <citation type="submission" date="1997-09" db="EMBL/GenBank/DDBJ databases">
        <authorList>
            <person name="Panico E."/>
            <person name="Baysdorfer C."/>
        </authorList>
    </citation>
    <scope>NUCLEOTIDE SEQUENCE [MRNA]</scope>
</reference>
<proteinExistence type="evidence at transcript level"/>
<organism>
    <name type="scientific">Fritillaria agrestis</name>
    <name type="common">Stinkbells</name>
    <dbReference type="NCBI Taxonomy" id="64177"/>
    <lineage>
        <taxon>Eukaryota</taxon>
        <taxon>Viridiplantae</taxon>
        <taxon>Streptophyta</taxon>
        <taxon>Embryophyta</taxon>
        <taxon>Tracheophyta</taxon>
        <taxon>Spermatophyta</taxon>
        <taxon>Magnoliopsida</taxon>
        <taxon>Liliopsida</taxon>
        <taxon>Liliales</taxon>
        <taxon>Liliaceae</taxon>
        <taxon>Fritillaria</taxon>
    </lineage>
</organism>
<comment type="function">
    <text evidence="1">RuBisCO catalyzes two reactions: the carboxylation of D-ribulose 1,5-bisphosphate, the primary event in carbon dioxide fixation, as well as the oxidative fragmentation of the pentose substrate. Both reactions occur simultaneously and in competition at the same active site. Although the small subunit is not catalytic it is essential for maximal activity.</text>
</comment>
<comment type="subunit">
    <text evidence="1">Heterohexadecamer of 8 large and 8 small subunits.</text>
</comment>
<comment type="subcellular location">
    <subcellularLocation>
        <location evidence="1">Plastid</location>
        <location evidence="1">Chloroplast</location>
    </subcellularLocation>
</comment>
<comment type="miscellaneous">
    <text evidence="1">The basic functional RuBisCO is composed of a large chain homodimer in a 'head-to-tail' conformation. In form I RuBisCO this homodimer is arranged in a barrel-like tetramer with the small subunits forming a tetrameric 'cap' on each end of the 'barrel'.</text>
</comment>
<comment type="similarity">
    <text evidence="1">Belongs to the RuBisCO small chain family.</text>
</comment>
<keyword id="KW-0113">Calvin cycle</keyword>
<keyword id="KW-0120">Carbon dioxide fixation</keyword>
<keyword id="KW-0150">Chloroplast</keyword>
<keyword id="KW-0601">Photorespiration</keyword>
<keyword id="KW-0602">Photosynthesis</keyword>
<keyword id="KW-0934">Plastid</keyword>
<keyword id="KW-0809">Transit peptide</keyword>
<accession>O24634</accession>
<protein>
    <recommendedName>
        <fullName evidence="2">Ribulose bisphosphate carboxylase small subunit, chloroplastic 1/4</fullName>
        <shortName evidence="2">RuBisCO small subunit 1/4</shortName>
    </recommendedName>
</protein>
<dbReference type="EMBL" id="AF031543">
    <property type="protein sequence ID" value="AAB86853.1"/>
    <property type="molecule type" value="mRNA"/>
</dbReference>
<dbReference type="EMBL" id="AF024572">
    <property type="protein sequence ID" value="AAB84179.1"/>
    <property type="molecule type" value="mRNA"/>
</dbReference>
<dbReference type="SMR" id="O24634"/>
<dbReference type="GO" id="GO:0009507">
    <property type="term" value="C:chloroplast"/>
    <property type="evidence" value="ECO:0007669"/>
    <property type="project" value="UniProtKB-SubCell"/>
</dbReference>
<dbReference type="GO" id="GO:0016984">
    <property type="term" value="F:ribulose-bisphosphate carboxylase activity"/>
    <property type="evidence" value="ECO:0007669"/>
    <property type="project" value="UniProtKB-UniRule"/>
</dbReference>
<dbReference type="GO" id="GO:0009853">
    <property type="term" value="P:photorespiration"/>
    <property type="evidence" value="ECO:0007669"/>
    <property type="project" value="UniProtKB-KW"/>
</dbReference>
<dbReference type="GO" id="GO:0019253">
    <property type="term" value="P:reductive pentose-phosphate cycle"/>
    <property type="evidence" value="ECO:0007669"/>
    <property type="project" value="UniProtKB-UniRule"/>
</dbReference>
<dbReference type="CDD" id="cd03527">
    <property type="entry name" value="RuBisCO_small"/>
    <property type="match status" value="1"/>
</dbReference>
<dbReference type="FunFam" id="3.30.190.10:FF:000001">
    <property type="entry name" value="Ribulose bisphosphate carboxylase small chain, chloroplastic"/>
    <property type="match status" value="1"/>
</dbReference>
<dbReference type="Gene3D" id="3.30.190.10">
    <property type="entry name" value="Ribulose bisphosphate carboxylase, small subunit"/>
    <property type="match status" value="1"/>
</dbReference>
<dbReference type="HAMAP" id="MF_00859">
    <property type="entry name" value="RuBisCO_S_bact"/>
    <property type="match status" value="1"/>
</dbReference>
<dbReference type="InterPro" id="IPR024681">
    <property type="entry name" value="RuBisCO_ssu"/>
</dbReference>
<dbReference type="InterPro" id="IPR000894">
    <property type="entry name" value="RuBisCO_ssu_dom"/>
</dbReference>
<dbReference type="InterPro" id="IPR024680">
    <property type="entry name" value="RuBisCO_ssu_N"/>
</dbReference>
<dbReference type="InterPro" id="IPR036385">
    <property type="entry name" value="RuBisCO_ssu_sf"/>
</dbReference>
<dbReference type="PANTHER" id="PTHR31262">
    <property type="entry name" value="RIBULOSE BISPHOSPHATE CARBOXYLASE SMALL CHAIN 1, CHLOROPLASTIC"/>
    <property type="match status" value="1"/>
</dbReference>
<dbReference type="PANTHER" id="PTHR31262:SF10">
    <property type="entry name" value="RIBULOSE BISPHOSPHATE CARBOXYLASE SMALL SUBUNIT 1A, CHLOROPLASTIC-RELATED"/>
    <property type="match status" value="1"/>
</dbReference>
<dbReference type="Pfam" id="PF12338">
    <property type="entry name" value="RbcS"/>
    <property type="match status" value="1"/>
</dbReference>
<dbReference type="Pfam" id="PF00101">
    <property type="entry name" value="RuBisCO_small"/>
    <property type="match status" value="1"/>
</dbReference>
<dbReference type="PRINTS" id="PR00152">
    <property type="entry name" value="RUBISCOSMALL"/>
</dbReference>
<dbReference type="SMART" id="SM00961">
    <property type="entry name" value="RuBisCO_small"/>
    <property type="match status" value="1"/>
</dbReference>
<dbReference type="SUPFAM" id="SSF55239">
    <property type="entry name" value="RuBisCO, small subunit"/>
    <property type="match status" value="1"/>
</dbReference>
<feature type="transit peptide" description="Chloroplast" evidence="1">
    <location>
        <begin position="1"/>
        <end position="58"/>
    </location>
</feature>
<feature type="chain" id="PRO_0000031500" description="Ribulose bisphosphate carboxylase small subunit, chloroplastic 1/4" evidence="1">
    <location>
        <begin position="59"/>
        <end position="179"/>
    </location>
</feature>
<sequence>MAASSTMLSSVATAACAAPAQASMVAPFVGLKSTSAFPVTQKPATGLSTLPSNGGRVQCMKVWPIVGLKKFETLSYLPTLSVESLLKQIEYLIRNGWVPCLEFSLEGFVSRDNNKSPGYYDGRYWTMWKLPMFGCTDAAQVVKEAAECKKEYPAAFIRVIGFDNVRQVQCVSFIVERPE</sequence>
<name>RBS1_FRIAG</name>